<feature type="chain" id="PRO_0000408982" description="Energy-coupling factor transporter transmembrane protein EcfT">
    <location>
        <begin position="1"/>
        <end position="268"/>
    </location>
</feature>
<feature type="transmembrane region" description="Helical" evidence="1">
    <location>
        <begin position="26"/>
        <end position="46"/>
    </location>
</feature>
<feature type="transmembrane region" description="Helical" evidence="1">
    <location>
        <begin position="47"/>
        <end position="67"/>
    </location>
</feature>
<feature type="transmembrane region" description="Helical" evidence="1">
    <location>
        <begin position="73"/>
        <end position="93"/>
    </location>
</feature>
<feature type="transmembrane region" description="Helical" evidence="1">
    <location>
        <begin position="116"/>
        <end position="136"/>
    </location>
</feature>
<feature type="transmembrane region" description="Helical" evidence="1">
    <location>
        <begin position="151"/>
        <end position="171"/>
    </location>
</feature>
<feature type="transmembrane region" description="Helical" evidence="1">
    <location>
        <begin position="246"/>
        <end position="266"/>
    </location>
</feature>
<comment type="function">
    <text evidence="1">Transmembrane (T) component of an energy-coupling factor (ECF) ABC-transporter complex. Unlike classic ABC transporters this ECF transporter provides the energy necessary to transport a number of different substrates.</text>
</comment>
<comment type="subunit">
    <text evidence="1">Forms a stable energy-coupling factor (ECF) transporter complex composed of 2 membrane-embedded substrate-binding proteins (S component), 2 ATP-binding proteins (A component) and 2 transmembrane proteins (T component). May be able to interact with more than 1 S component at a time (By similarity).</text>
</comment>
<comment type="subcellular location">
    <subcellularLocation>
        <location evidence="1">Cell membrane</location>
        <topology evidence="1">Multi-pass membrane protein</topology>
    </subcellularLocation>
</comment>
<comment type="similarity">
    <text evidence="1">Belongs to the energy-coupling factor EcfT family.</text>
</comment>
<keyword id="KW-1003">Cell membrane</keyword>
<keyword id="KW-0472">Membrane</keyword>
<keyword id="KW-1185">Reference proteome</keyword>
<keyword id="KW-0812">Transmembrane</keyword>
<keyword id="KW-1133">Transmembrane helix</keyword>
<keyword id="KW-0813">Transport</keyword>
<name>ECFT_ACIFV</name>
<organism>
    <name type="scientific">Acidaminococcus fermentans (strain ATCC 25085 / DSM 20731 / CCUG 9996 / CIP 106432 / VR4)</name>
    <dbReference type="NCBI Taxonomy" id="591001"/>
    <lineage>
        <taxon>Bacteria</taxon>
        <taxon>Bacillati</taxon>
        <taxon>Bacillota</taxon>
        <taxon>Negativicutes</taxon>
        <taxon>Acidaminococcales</taxon>
        <taxon>Acidaminococcaceae</taxon>
        <taxon>Acidaminococcus</taxon>
    </lineage>
</organism>
<proteinExistence type="inferred from homology"/>
<reference key="1">
    <citation type="journal article" date="2010" name="Stand. Genomic Sci.">
        <title>Complete genome sequence of Acidaminococcus fermentans type strain (VR4).</title>
        <authorList>
            <person name="Chang Y.J."/>
            <person name="Pukall R."/>
            <person name="Saunders E."/>
            <person name="Lapidus A."/>
            <person name="Copeland A."/>
            <person name="Nolan M."/>
            <person name="Glavina Del Rio T."/>
            <person name="Lucas S."/>
            <person name="Chen F."/>
            <person name="Tice H."/>
            <person name="Cheng J.F."/>
            <person name="Han C."/>
            <person name="Detter J.C."/>
            <person name="Bruce D."/>
            <person name="Goodwin L."/>
            <person name="Pitluck S."/>
            <person name="Mikhailova N."/>
            <person name="Liolios K."/>
            <person name="Pati A."/>
            <person name="Ivanova N."/>
            <person name="Mavromatis K."/>
            <person name="Chen A."/>
            <person name="Palaniappan K."/>
            <person name="Land M."/>
            <person name="Hauser L."/>
            <person name="Jeffries C.D."/>
            <person name="Brettin T."/>
            <person name="Rohde M."/>
            <person name="Goker M."/>
            <person name="Bristow J."/>
            <person name="Eisen J.A."/>
            <person name="Markowitz V."/>
            <person name="Hugenholtz P."/>
            <person name="Kyrpides N.C."/>
            <person name="Klenk H.P."/>
        </authorList>
    </citation>
    <scope>NUCLEOTIDE SEQUENCE [LARGE SCALE GENOMIC DNA]</scope>
    <source>
        <strain>ATCC 25085 / DSM 20731 / CCUG 9996 / CIP 106432 / VR4</strain>
    </source>
</reference>
<protein>
    <recommendedName>
        <fullName evidence="1">Energy-coupling factor transporter transmembrane protein EcfT</fullName>
        <shortName evidence="1">ECF transporter T component EcfT</shortName>
    </recommendedName>
</protein>
<gene>
    <name evidence="1" type="primary">ecfT</name>
    <name type="ordered locus">Acfer_0350</name>
</gene>
<accession>D2RNY0</accession>
<dbReference type="EMBL" id="CP001859">
    <property type="protein sequence ID" value="ADB46756.1"/>
    <property type="molecule type" value="Genomic_DNA"/>
</dbReference>
<dbReference type="RefSeq" id="WP_012937746.1">
    <property type="nucleotide sequence ID" value="NC_013740.1"/>
</dbReference>
<dbReference type="SMR" id="D2RNY0"/>
<dbReference type="STRING" id="591001.Acfer_0350"/>
<dbReference type="GeneID" id="78334104"/>
<dbReference type="KEGG" id="afn:Acfer_0350"/>
<dbReference type="eggNOG" id="COG0619">
    <property type="taxonomic scope" value="Bacteria"/>
</dbReference>
<dbReference type="HOGENOM" id="CLU_056469_2_2_9"/>
<dbReference type="OrthoDB" id="8075495at2"/>
<dbReference type="Proteomes" id="UP000001902">
    <property type="component" value="Chromosome"/>
</dbReference>
<dbReference type="GO" id="GO:0005886">
    <property type="term" value="C:plasma membrane"/>
    <property type="evidence" value="ECO:0007669"/>
    <property type="project" value="UniProtKB-SubCell"/>
</dbReference>
<dbReference type="GO" id="GO:0022857">
    <property type="term" value="F:transmembrane transporter activity"/>
    <property type="evidence" value="ECO:0007669"/>
    <property type="project" value="UniProtKB-UniRule"/>
</dbReference>
<dbReference type="CDD" id="cd16914">
    <property type="entry name" value="EcfT"/>
    <property type="match status" value="1"/>
</dbReference>
<dbReference type="HAMAP" id="MF_01461">
    <property type="entry name" value="EcfT"/>
    <property type="match status" value="1"/>
</dbReference>
<dbReference type="InterPro" id="IPR003339">
    <property type="entry name" value="ABC/ECF_trnsptr_transmembrane"/>
</dbReference>
<dbReference type="InterPro" id="IPR051611">
    <property type="entry name" value="ECF_transporter_component"/>
</dbReference>
<dbReference type="InterPro" id="IPR024919">
    <property type="entry name" value="EcfT"/>
</dbReference>
<dbReference type="PANTHER" id="PTHR34857">
    <property type="entry name" value="SLL0384 PROTEIN"/>
    <property type="match status" value="1"/>
</dbReference>
<dbReference type="PANTHER" id="PTHR34857:SF2">
    <property type="entry name" value="SLL0384 PROTEIN"/>
    <property type="match status" value="1"/>
</dbReference>
<dbReference type="Pfam" id="PF02361">
    <property type="entry name" value="CbiQ"/>
    <property type="match status" value="1"/>
</dbReference>
<evidence type="ECO:0000255" key="1">
    <source>
        <dbReference type="HAMAP-Rule" id="MF_01461"/>
    </source>
</evidence>
<sequence>MLTDITLGQYYPGNSCIHRLDPRTKILAVLFYMVMVFLANSPLSYGILIGFIVLGAALAKLPAGLLLRSIKPLWIIILLTMVIHFVTDPGEALWHWKFITVTREGIVLGVKMSLRLVLLLLVSSLMTFTTSPIVLTDGIESLLRPFKKIGVPAHELAMMMTIALRFIPTLLEETDRIMKAQMSRGADFSSGNIMKRAKNMLPILIPLFISSFRRADELALAMEARCYRGGEGRTRMHELVYGKADALTGLVMLALFVLLAFLRWGIPA</sequence>